<dbReference type="EMBL" id="CU928160">
    <property type="protein sequence ID" value="CAQ97679.1"/>
    <property type="molecule type" value="Genomic_DNA"/>
</dbReference>
<dbReference type="RefSeq" id="WP_000042533.1">
    <property type="nucleotide sequence ID" value="NC_011741.1"/>
</dbReference>
<dbReference type="SMR" id="B7M751"/>
<dbReference type="GeneID" id="93776651"/>
<dbReference type="KEGG" id="ecr:ECIAI1_0814"/>
<dbReference type="HOGENOM" id="CLU_009621_2_1_6"/>
<dbReference type="GO" id="GO:0005737">
    <property type="term" value="C:cytoplasm"/>
    <property type="evidence" value="ECO:0007669"/>
    <property type="project" value="UniProtKB-SubCell"/>
</dbReference>
<dbReference type="GO" id="GO:0009380">
    <property type="term" value="C:excinuclease repair complex"/>
    <property type="evidence" value="ECO:0007669"/>
    <property type="project" value="InterPro"/>
</dbReference>
<dbReference type="GO" id="GO:0005524">
    <property type="term" value="F:ATP binding"/>
    <property type="evidence" value="ECO:0007669"/>
    <property type="project" value="UniProtKB-UniRule"/>
</dbReference>
<dbReference type="GO" id="GO:0016887">
    <property type="term" value="F:ATP hydrolysis activity"/>
    <property type="evidence" value="ECO:0007669"/>
    <property type="project" value="InterPro"/>
</dbReference>
<dbReference type="GO" id="GO:0003677">
    <property type="term" value="F:DNA binding"/>
    <property type="evidence" value="ECO:0007669"/>
    <property type="project" value="UniProtKB-UniRule"/>
</dbReference>
<dbReference type="GO" id="GO:0009381">
    <property type="term" value="F:excinuclease ABC activity"/>
    <property type="evidence" value="ECO:0007669"/>
    <property type="project" value="UniProtKB-UniRule"/>
</dbReference>
<dbReference type="GO" id="GO:0004386">
    <property type="term" value="F:helicase activity"/>
    <property type="evidence" value="ECO:0007669"/>
    <property type="project" value="UniProtKB-KW"/>
</dbReference>
<dbReference type="GO" id="GO:0006289">
    <property type="term" value="P:nucleotide-excision repair"/>
    <property type="evidence" value="ECO:0007669"/>
    <property type="project" value="UniProtKB-UniRule"/>
</dbReference>
<dbReference type="GO" id="GO:0009432">
    <property type="term" value="P:SOS response"/>
    <property type="evidence" value="ECO:0007669"/>
    <property type="project" value="UniProtKB-UniRule"/>
</dbReference>
<dbReference type="CDD" id="cd17916">
    <property type="entry name" value="DEXHc_UvrB"/>
    <property type="match status" value="1"/>
</dbReference>
<dbReference type="CDD" id="cd18790">
    <property type="entry name" value="SF2_C_UvrB"/>
    <property type="match status" value="1"/>
</dbReference>
<dbReference type="FunFam" id="3.40.50.300:FF:000257">
    <property type="entry name" value="UvrABC system protein B"/>
    <property type="match status" value="1"/>
</dbReference>
<dbReference type="FunFam" id="3.40.50.300:FF:000401">
    <property type="entry name" value="UvrABC system protein B"/>
    <property type="match status" value="1"/>
</dbReference>
<dbReference type="FunFam" id="3.40.50.300:FF:000477">
    <property type="entry name" value="UvrABC system protein B"/>
    <property type="match status" value="1"/>
</dbReference>
<dbReference type="Gene3D" id="3.40.50.300">
    <property type="entry name" value="P-loop containing nucleotide triphosphate hydrolases"/>
    <property type="match status" value="3"/>
</dbReference>
<dbReference type="Gene3D" id="4.10.860.10">
    <property type="entry name" value="UVR domain"/>
    <property type="match status" value="1"/>
</dbReference>
<dbReference type="HAMAP" id="MF_00204">
    <property type="entry name" value="UvrB"/>
    <property type="match status" value="1"/>
</dbReference>
<dbReference type="InterPro" id="IPR006935">
    <property type="entry name" value="Helicase/UvrB_N"/>
</dbReference>
<dbReference type="InterPro" id="IPR014001">
    <property type="entry name" value="Helicase_ATP-bd"/>
</dbReference>
<dbReference type="InterPro" id="IPR001650">
    <property type="entry name" value="Helicase_C-like"/>
</dbReference>
<dbReference type="InterPro" id="IPR027417">
    <property type="entry name" value="P-loop_NTPase"/>
</dbReference>
<dbReference type="InterPro" id="IPR001943">
    <property type="entry name" value="UVR_dom"/>
</dbReference>
<dbReference type="InterPro" id="IPR036876">
    <property type="entry name" value="UVR_dom_sf"/>
</dbReference>
<dbReference type="InterPro" id="IPR004807">
    <property type="entry name" value="UvrB"/>
</dbReference>
<dbReference type="InterPro" id="IPR041471">
    <property type="entry name" value="UvrB_inter"/>
</dbReference>
<dbReference type="InterPro" id="IPR024759">
    <property type="entry name" value="UvrB_YAD/RRR_dom"/>
</dbReference>
<dbReference type="NCBIfam" id="NF003673">
    <property type="entry name" value="PRK05298.1"/>
    <property type="match status" value="1"/>
</dbReference>
<dbReference type="NCBIfam" id="TIGR00631">
    <property type="entry name" value="uvrb"/>
    <property type="match status" value="1"/>
</dbReference>
<dbReference type="PANTHER" id="PTHR24029">
    <property type="entry name" value="UVRABC SYSTEM PROTEIN B"/>
    <property type="match status" value="1"/>
</dbReference>
<dbReference type="PANTHER" id="PTHR24029:SF0">
    <property type="entry name" value="UVRABC SYSTEM PROTEIN B"/>
    <property type="match status" value="1"/>
</dbReference>
<dbReference type="Pfam" id="PF00271">
    <property type="entry name" value="Helicase_C"/>
    <property type="match status" value="1"/>
</dbReference>
<dbReference type="Pfam" id="PF04851">
    <property type="entry name" value="ResIII"/>
    <property type="match status" value="1"/>
</dbReference>
<dbReference type="Pfam" id="PF02151">
    <property type="entry name" value="UVR"/>
    <property type="match status" value="1"/>
</dbReference>
<dbReference type="Pfam" id="PF12344">
    <property type="entry name" value="UvrB"/>
    <property type="match status" value="1"/>
</dbReference>
<dbReference type="Pfam" id="PF17757">
    <property type="entry name" value="UvrB_inter"/>
    <property type="match status" value="1"/>
</dbReference>
<dbReference type="SMART" id="SM00487">
    <property type="entry name" value="DEXDc"/>
    <property type="match status" value="1"/>
</dbReference>
<dbReference type="SMART" id="SM00490">
    <property type="entry name" value="HELICc"/>
    <property type="match status" value="1"/>
</dbReference>
<dbReference type="SUPFAM" id="SSF46600">
    <property type="entry name" value="C-terminal UvrC-binding domain of UvrB"/>
    <property type="match status" value="1"/>
</dbReference>
<dbReference type="SUPFAM" id="SSF52540">
    <property type="entry name" value="P-loop containing nucleoside triphosphate hydrolases"/>
    <property type="match status" value="2"/>
</dbReference>
<dbReference type="PROSITE" id="PS51192">
    <property type="entry name" value="HELICASE_ATP_BIND_1"/>
    <property type="match status" value="1"/>
</dbReference>
<dbReference type="PROSITE" id="PS51194">
    <property type="entry name" value="HELICASE_CTER"/>
    <property type="match status" value="1"/>
</dbReference>
<dbReference type="PROSITE" id="PS50151">
    <property type="entry name" value="UVR"/>
    <property type="match status" value="1"/>
</dbReference>
<gene>
    <name evidence="1" type="primary">uvrB</name>
    <name type="ordered locus">ECIAI1_0814</name>
</gene>
<sequence>MSKPFKLNSAFKPSGDQPEAIRRLEEGLEDGLAHQTLLGVTGSGKTFTIANVIADLQRPTMVLAPNKTLAAQLYGEMKEFFPENAVEYFVSYYDYYQPEAYVPSSDTFIEKDASVNEHIEQMRLSATKAMLERRDVVVVASVSAIYGLGDPDLYLKMMLHLTVGMIIDQRAILRRLAELQYARNDQAFQRGTFRVRGEVIDIFPAESDDIALRVELFDEEVERLSLFDPLTGQIVSTIPRFTIYPKTHYVTPRERIVQAMEEIKEELAARRKVLLENNKLLEEQRLTQRTQFDLEMMNELGYCSGIENYSRFLSGRGPGEPPPTLFDYLPADGLLVVDESHVTIPQIGGMYRGDRARKETLVEYGFRLPSALDNRPLKFEEFEALAPQTIYVSATPGNYELEKSGGDVVDQVVRPTGLLDPIIEVRPVATQVDDLLSEIRQRAAINERVLVTTLTKRMAEDLTEYLEEHGERVRYLHSDIDTVERMEIIRDLRLGEFDVLVGINLLREGLDMPEVSLVAILDADKEGFLRSERSLIQTIGRAARNVNGKAILYGDKITPSMAKAIGETERRREKQQKYNEEHGITPQGLNKKVVDILALGQNIAKTKAKGRGKSRPIVEPDNVPMDMSPKALQQKIHELEGLMMQHAQNLEFEEAAQIRDQLHQLRELFIAAS</sequence>
<name>UVRB_ECO8A</name>
<proteinExistence type="inferred from homology"/>
<protein>
    <recommendedName>
        <fullName evidence="1">UvrABC system protein B</fullName>
        <shortName evidence="1">Protein UvrB</shortName>
    </recommendedName>
    <alternativeName>
        <fullName evidence="1">Excinuclease ABC subunit B</fullName>
    </alternativeName>
</protein>
<feature type="chain" id="PRO_1000200546" description="UvrABC system protein B">
    <location>
        <begin position="1"/>
        <end position="673"/>
    </location>
</feature>
<feature type="domain" description="Helicase ATP-binding" evidence="1">
    <location>
        <begin position="26"/>
        <end position="183"/>
    </location>
</feature>
<feature type="domain" description="Helicase C-terminal" evidence="1">
    <location>
        <begin position="431"/>
        <end position="597"/>
    </location>
</feature>
<feature type="domain" description="UVR" evidence="1">
    <location>
        <begin position="633"/>
        <end position="668"/>
    </location>
</feature>
<feature type="region of interest" description="Disordered" evidence="2">
    <location>
        <begin position="608"/>
        <end position="627"/>
    </location>
</feature>
<feature type="short sequence motif" description="Beta-hairpin">
    <location>
        <begin position="92"/>
        <end position="115"/>
    </location>
</feature>
<feature type="binding site" evidence="1">
    <location>
        <begin position="39"/>
        <end position="46"/>
    </location>
    <ligand>
        <name>ATP</name>
        <dbReference type="ChEBI" id="CHEBI:30616"/>
    </ligand>
</feature>
<keyword id="KW-0067">ATP-binding</keyword>
<keyword id="KW-0963">Cytoplasm</keyword>
<keyword id="KW-0227">DNA damage</keyword>
<keyword id="KW-0228">DNA excision</keyword>
<keyword id="KW-0234">DNA repair</keyword>
<keyword id="KW-0267">Excision nuclease</keyword>
<keyword id="KW-0347">Helicase</keyword>
<keyword id="KW-0378">Hydrolase</keyword>
<keyword id="KW-0547">Nucleotide-binding</keyword>
<keyword id="KW-0742">SOS response</keyword>
<accession>B7M751</accession>
<evidence type="ECO:0000255" key="1">
    <source>
        <dbReference type="HAMAP-Rule" id="MF_00204"/>
    </source>
</evidence>
<evidence type="ECO:0000256" key="2">
    <source>
        <dbReference type="SAM" id="MobiDB-lite"/>
    </source>
</evidence>
<reference key="1">
    <citation type="journal article" date="2009" name="PLoS Genet.">
        <title>Organised genome dynamics in the Escherichia coli species results in highly diverse adaptive paths.</title>
        <authorList>
            <person name="Touchon M."/>
            <person name="Hoede C."/>
            <person name="Tenaillon O."/>
            <person name="Barbe V."/>
            <person name="Baeriswyl S."/>
            <person name="Bidet P."/>
            <person name="Bingen E."/>
            <person name="Bonacorsi S."/>
            <person name="Bouchier C."/>
            <person name="Bouvet O."/>
            <person name="Calteau A."/>
            <person name="Chiapello H."/>
            <person name="Clermont O."/>
            <person name="Cruveiller S."/>
            <person name="Danchin A."/>
            <person name="Diard M."/>
            <person name="Dossat C."/>
            <person name="Karoui M.E."/>
            <person name="Frapy E."/>
            <person name="Garry L."/>
            <person name="Ghigo J.M."/>
            <person name="Gilles A.M."/>
            <person name="Johnson J."/>
            <person name="Le Bouguenec C."/>
            <person name="Lescat M."/>
            <person name="Mangenot S."/>
            <person name="Martinez-Jehanne V."/>
            <person name="Matic I."/>
            <person name="Nassif X."/>
            <person name="Oztas S."/>
            <person name="Petit M.A."/>
            <person name="Pichon C."/>
            <person name="Rouy Z."/>
            <person name="Ruf C.S."/>
            <person name="Schneider D."/>
            <person name="Tourret J."/>
            <person name="Vacherie B."/>
            <person name="Vallenet D."/>
            <person name="Medigue C."/>
            <person name="Rocha E.P.C."/>
            <person name="Denamur E."/>
        </authorList>
    </citation>
    <scope>NUCLEOTIDE SEQUENCE [LARGE SCALE GENOMIC DNA]</scope>
    <source>
        <strain>IAI1</strain>
    </source>
</reference>
<comment type="function">
    <text evidence="1">The UvrABC repair system catalyzes the recognition and processing of DNA lesions. A damage recognition complex composed of 2 UvrA and 2 UvrB subunits scans DNA for abnormalities. Upon binding of the UvrA(2)B(2) complex to a putative damaged site, the DNA wraps around one UvrB monomer. DNA wrap is dependent on ATP binding by UvrB and probably causes local melting of the DNA helix, facilitating insertion of UvrB beta-hairpin between the DNA strands. Then UvrB probes one DNA strand for the presence of a lesion. If a lesion is found the UvrA subunits dissociate and the UvrB-DNA preincision complex is formed. This complex is subsequently bound by UvrC and the second UvrB is released. If no lesion is found, the DNA wraps around the other UvrB subunit that will check the other stand for damage.</text>
</comment>
<comment type="subunit">
    <text evidence="1">Forms a heterotetramer with UvrA during the search for lesions. Interacts with UvrC in an incision complex.</text>
</comment>
<comment type="subcellular location">
    <subcellularLocation>
        <location evidence="1">Cytoplasm</location>
    </subcellularLocation>
</comment>
<comment type="domain">
    <text evidence="1">The beta-hairpin motif is involved in DNA binding.</text>
</comment>
<comment type="similarity">
    <text evidence="1">Belongs to the UvrB family.</text>
</comment>
<organism>
    <name type="scientific">Escherichia coli O8 (strain IAI1)</name>
    <dbReference type="NCBI Taxonomy" id="585034"/>
    <lineage>
        <taxon>Bacteria</taxon>
        <taxon>Pseudomonadati</taxon>
        <taxon>Pseudomonadota</taxon>
        <taxon>Gammaproteobacteria</taxon>
        <taxon>Enterobacterales</taxon>
        <taxon>Enterobacteriaceae</taxon>
        <taxon>Escherichia</taxon>
    </lineage>
</organism>